<name>CH10_DELAS</name>
<accession>A9BXL2</accession>
<reference key="1">
    <citation type="submission" date="2007-11" db="EMBL/GenBank/DDBJ databases">
        <title>Complete sequence of Delftia acidovorans DSM 14801 / SPH-1.</title>
        <authorList>
            <person name="Copeland A."/>
            <person name="Lucas S."/>
            <person name="Lapidus A."/>
            <person name="Barry K."/>
            <person name="Glavina del Rio T."/>
            <person name="Dalin E."/>
            <person name="Tice H."/>
            <person name="Pitluck S."/>
            <person name="Lowry S."/>
            <person name="Clum A."/>
            <person name="Schmutz J."/>
            <person name="Larimer F."/>
            <person name="Land M."/>
            <person name="Hauser L."/>
            <person name="Kyrpides N."/>
            <person name="Kim E."/>
            <person name="Schleheck D."/>
            <person name="Richardson P."/>
        </authorList>
    </citation>
    <scope>NUCLEOTIDE SEQUENCE [LARGE SCALE GENOMIC DNA]</scope>
    <source>
        <strain>DSM 14801 / SPH-1</strain>
    </source>
</reference>
<feature type="chain" id="PRO_1000129647" description="Co-chaperonin GroES">
    <location>
        <begin position="1"/>
        <end position="96"/>
    </location>
</feature>
<keyword id="KW-0143">Chaperone</keyword>
<keyword id="KW-0963">Cytoplasm</keyword>
<keyword id="KW-1185">Reference proteome</keyword>
<comment type="function">
    <text evidence="1">Together with the chaperonin GroEL, plays an essential role in assisting protein folding. The GroEL-GroES system forms a nano-cage that allows encapsulation of the non-native substrate proteins and provides a physical environment optimized to promote and accelerate protein folding. GroES binds to the apical surface of the GroEL ring, thereby capping the opening of the GroEL channel.</text>
</comment>
<comment type="subunit">
    <text evidence="1">Heptamer of 7 subunits arranged in a ring. Interacts with the chaperonin GroEL.</text>
</comment>
<comment type="subcellular location">
    <subcellularLocation>
        <location evidence="1">Cytoplasm</location>
    </subcellularLocation>
</comment>
<comment type="similarity">
    <text evidence="1">Belongs to the GroES chaperonin family.</text>
</comment>
<organism>
    <name type="scientific">Delftia acidovorans (strain DSM 14801 / SPH-1)</name>
    <dbReference type="NCBI Taxonomy" id="398578"/>
    <lineage>
        <taxon>Bacteria</taxon>
        <taxon>Pseudomonadati</taxon>
        <taxon>Pseudomonadota</taxon>
        <taxon>Betaproteobacteria</taxon>
        <taxon>Burkholderiales</taxon>
        <taxon>Comamonadaceae</taxon>
        <taxon>Delftia</taxon>
    </lineage>
</organism>
<dbReference type="EMBL" id="CP000884">
    <property type="protein sequence ID" value="ABX38288.1"/>
    <property type="molecule type" value="Genomic_DNA"/>
</dbReference>
<dbReference type="RefSeq" id="WP_012207457.1">
    <property type="nucleotide sequence ID" value="NC_010002.1"/>
</dbReference>
<dbReference type="SMR" id="A9BXL2"/>
<dbReference type="STRING" id="398578.Daci_5660"/>
<dbReference type="GeneID" id="24118513"/>
<dbReference type="KEGG" id="dac:Daci_5660"/>
<dbReference type="eggNOG" id="COG0234">
    <property type="taxonomic scope" value="Bacteria"/>
</dbReference>
<dbReference type="HOGENOM" id="CLU_132825_0_0_4"/>
<dbReference type="Proteomes" id="UP000000784">
    <property type="component" value="Chromosome"/>
</dbReference>
<dbReference type="GO" id="GO:0005737">
    <property type="term" value="C:cytoplasm"/>
    <property type="evidence" value="ECO:0007669"/>
    <property type="project" value="UniProtKB-SubCell"/>
</dbReference>
<dbReference type="GO" id="GO:0005524">
    <property type="term" value="F:ATP binding"/>
    <property type="evidence" value="ECO:0007669"/>
    <property type="project" value="InterPro"/>
</dbReference>
<dbReference type="GO" id="GO:0046872">
    <property type="term" value="F:metal ion binding"/>
    <property type="evidence" value="ECO:0007669"/>
    <property type="project" value="TreeGrafter"/>
</dbReference>
<dbReference type="GO" id="GO:0044183">
    <property type="term" value="F:protein folding chaperone"/>
    <property type="evidence" value="ECO:0007669"/>
    <property type="project" value="InterPro"/>
</dbReference>
<dbReference type="GO" id="GO:0051087">
    <property type="term" value="F:protein-folding chaperone binding"/>
    <property type="evidence" value="ECO:0007669"/>
    <property type="project" value="TreeGrafter"/>
</dbReference>
<dbReference type="GO" id="GO:0051082">
    <property type="term" value="F:unfolded protein binding"/>
    <property type="evidence" value="ECO:0007669"/>
    <property type="project" value="TreeGrafter"/>
</dbReference>
<dbReference type="GO" id="GO:0051085">
    <property type="term" value="P:chaperone cofactor-dependent protein refolding"/>
    <property type="evidence" value="ECO:0007669"/>
    <property type="project" value="TreeGrafter"/>
</dbReference>
<dbReference type="CDD" id="cd00320">
    <property type="entry name" value="cpn10"/>
    <property type="match status" value="1"/>
</dbReference>
<dbReference type="FunFam" id="2.30.33.40:FF:000001">
    <property type="entry name" value="10 kDa chaperonin"/>
    <property type="match status" value="1"/>
</dbReference>
<dbReference type="Gene3D" id="2.30.33.40">
    <property type="entry name" value="GroES chaperonin"/>
    <property type="match status" value="1"/>
</dbReference>
<dbReference type="HAMAP" id="MF_00580">
    <property type="entry name" value="CH10"/>
    <property type="match status" value="1"/>
</dbReference>
<dbReference type="InterPro" id="IPR020818">
    <property type="entry name" value="Chaperonin_GroES"/>
</dbReference>
<dbReference type="InterPro" id="IPR037124">
    <property type="entry name" value="Chaperonin_GroES_sf"/>
</dbReference>
<dbReference type="InterPro" id="IPR018369">
    <property type="entry name" value="Chaprnonin_Cpn10_CS"/>
</dbReference>
<dbReference type="InterPro" id="IPR011032">
    <property type="entry name" value="GroES-like_sf"/>
</dbReference>
<dbReference type="NCBIfam" id="NF001527">
    <property type="entry name" value="PRK00364.1-2"/>
    <property type="match status" value="1"/>
</dbReference>
<dbReference type="NCBIfam" id="NF001529">
    <property type="entry name" value="PRK00364.1-5"/>
    <property type="match status" value="1"/>
</dbReference>
<dbReference type="NCBIfam" id="NF001531">
    <property type="entry name" value="PRK00364.2-2"/>
    <property type="match status" value="1"/>
</dbReference>
<dbReference type="NCBIfam" id="NF001533">
    <property type="entry name" value="PRK00364.2-4"/>
    <property type="match status" value="1"/>
</dbReference>
<dbReference type="PANTHER" id="PTHR10772">
    <property type="entry name" value="10 KDA HEAT SHOCK PROTEIN"/>
    <property type="match status" value="1"/>
</dbReference>
<dbReference type="PANTHER" id="PTHR10772:SF58">
    <property type="entry name" value="CO-CHAPERONIN GROES"/>
    <property type="match status" value="1"/>
</dbReference>
<dbReference type="Pfam" id="PF00166">
    <property type="entry name" value="Cpn10"/>
    <property type="match status" value="1"/>
</dbReference>
<dbReference type="PRINTS" id="PR00297">
    <property type="entry name" value="CHAPERONIN10"/>
</dbReference>
<dbReference type="SMART" id="SM00883">
    <property type="entry name" value="Cpn10"/>
    <property type="match status" value="1"/>
</dbReference>
<dbReference type="SUPFAM" id="SSF50129">
    <property type="entry name" value="GroES-like"/>
    <property type="match status" value="1"/>
</dbReference>
<dbReference type="PROSITE" id="PS00681">
    <property type="entry name" value="CHAPERONINS_CPN10"/>
    <property type="match status" value="1"/>
</dbReference>
<evidence type="ECO:0000255" key="1">
    <source>
        <dbReference type="HAMAP-Rule" id="MF_00580"/>
    </source>
</evidence>
<sequence>MNLRPLHDRVIVKRLENETKTASGIVIPENAAEKPDQGEVLAVGPGKKNDKGEVIALNVKVGDRVLFGKYSGQTVKVHGDELLVMKEDDLFAVVEK</sequence>
<gene>
    <name evidence="1" type="primary">groES</name>
    <name evidence="1" type="synonym">groS</name>
    <name type="ordered locus">Daci_5660</name>
</gene>
<proteinExistence type="inferred from homology"/>
<protein>
    <recommendedName>
        <fullName evidence="1">Co-chaperonin GroES</fullName>
    </recommendedName>
    <alternativeName>
        <fullName evidence="1">10 kDa chaperonin</fullName>
    </alternativeName>
    <alternativeName>
        <fullName evidence="1">Chaperonin-10</fullName>
        <shortName evidence="1">Cpn10</shortName>
    </alternativeName>
</protein>